<reference key="1">
    <citation type="journal article" date="1993" name="J. Mol. Biol.">
        <title>Primary structure and crystallization of orotate phosphoribosyltransferase from Salmonella typhimurium.</title>
        <authorList>
            <person name="Scapin G."/>
            <person name="Sacchettini J.C."/>
            <person name="Dessen A."/>
            <person name="Bhatia M."/>
            <person name="Grubmeyer C."/>
        </authorList>
    </citation>
    <scope>NUCLEOTIDE SEQUENCE [GENOMIC DNA]</scope>
</reference>
<reference key="2">
    <citation type="journal article" date="2001" name="Nature">
        <title>Complete genome sequence of Salmonella enterica serovar Typhimurium LT2.</title>
        <authorList>
            <person name="McClelland M."/>
            <person name="Sanderson K.E."/>
            <person name="Spieth J."/>
            <person name="Clifton S.W."/>
            <person name="Latreille P."/>
            <person name="Courtney L."/>
            <person name="Porwollik S."/>
            <person name="Ali J."/>
            <person name="Dante M."/>
            <person name="Du F."/>
            <person name="Hou S."/>
            <person name="Layman D."/>
            <person name="Leonard S."/>
            <person name="Nguyen C."/>
            <person name="Scott K."/>
            <person name="Holmes A."/>
            <person name="Grewal N."/>
            <person name="Mulvaney E."/>
            <person name="Ryan E."/>
            <person name="Sun H."/>
            <person name="Florea L."/>
            <person name="Miller W."/>
            <person name="Stoneking T."/>
            <person name="Nhan M."/>
            <person name="Waterston R."/>
            <person name="Wilson R.K."/>
        </authorList>
    </citation>
    <scope>NUCLEOTIDE SEQUENCE [LARGE SCALE GENOMIC DNA]</scope>
    <source>
        <strain>LT2 / SGSC1412 / ATCC 700720</strain>
    </source>
</reference>
<reference key="3">
    <citation type="journal article" date="1985" name="Eur. J. Biochem.">
        <title>Cloning and characterization of the pyrE gene and of PyrE::Mud1 (Ap lac) fusions from Salmonella typhimurium.</title>
        <authorList>
            <person name="Neuhard J."/>
            <person name="Stauning E."/>
            <person name="Kelln R.A."/>
        </authorList>
    </citation>
    <scope>NUCLEOTIDE SEQUENCE [GENOMIC DNA] OF 1-60</scope>
</reference>
<reference key="4">
    <citation type="journal article" date="1990" name="Biochemistry">
        <title>Kinetic mechanism of orotate phosphoribosyltransferase from Salmonella typhimurium.</title>
        <authorList>
            <person name="Bhatia M.B."/>
            <person name="Vinitsky A."/>
            <person name="Grubmeyer C."/>
        </authorList>
    </citation>
    <scope>PROTEIN SEQUENCE OF 2-17</scope>
    <scope>FUNCTION</scope>
    <scope>KINETIC MECHANISM</scope>
</reference>
<reference key="5">
    <citation type="journal article" date="1993" name="Arch. Biochem. Biophys.">
        <title>The role of divalent magnesium in activating the reaction catalyzed by orotate phosphoribosyltransferase.</title>
        <authorList>
            <person name="Bhatia M.B."/>
            <person name="Grubmeyer C."/>
        </authorList>
    </citation>
    <scope>COFACTOR</scope>
</reference>
<reference key="6">
    <citation type="journal article" date="1993" name="J. Biol. Chem.">
        <title>Active site lysines in orotate phosphoribosyltransferase.</title>
        <authorList>
            <person name="Grubmeyer C."/>
            <person name="Segura E."/>
            <person name="Dorfman R.H."/>
        </authorList>
    </citation>
    <scope>PROTEIN SEQUENCE OF 20-29 AND 100-108</scope>
</reference>
<reference key="7">
    <citation type="journal article" date="1995" name="Biochemistry">
        <title>Locations and functional roles of conserved lysine residues in Salmonella typhimurium orotate phosphoribosyltransferase.</title>
        <authorList>
            <person name="Ozturk D.H."/>
            <person name="Dorfman R.H."/>
            <person name="Scapin G."/>
            <person name="Sacchettini J.C."/>
            <person name="Grubmeyer C."/>
        </authorList>
    </citation>
    <scope>MUTAGENESIS</scope>
    <scope>PARTIAL PROTEIN SEQUENCE</scope>
</reference>
<reference key="8">
    <citation type="journal article" date="1995" name="Biochemistry">
        <title>Structure and function of Salmonella typhimurium orotate phosphoribosyltransferase: protein complementation reveals shared active sites.</title>
        <authorList>
            <person name="Ozturk D.H."/>
            <person name="Dorfman R.H."/>
            <person name="Scapin G."/>
            <person name="Sacchettini J.C."/>
            <person name="Grubmeyer C."/>
        </authorList>
    </citation>
    <scope>SUBUNIT</scope>
    <scope>BINDING SITES</scope>
</reference>
<reference key="9">
    <citation type="journal article" date="1994" name="Biochemistry">
        <title>Crystal structure of orotate phosphoribosyltransferase.</title>
        <authorList>
            <person name="Scapin G."/>
            <person name="Grubmeyer C."/>
            <person name="Sacchettini J.C."/>
        </authorList>
    </citation>
    <scope>X-RAY CRYSTALLOGRAPHY (2.6 ANGSTROMS) IN COMPLEX WITH OMP</scope>
</reference>
<reference key="10">
    <citation type="journal article" date="1995" name="Biochemistry">
        <title>The crystal structure of the orotate phosphoribosyltransferase complexed with orotate and alpha-D-5-phosphoribosyl-1-pyrophosphate.</title>
        <authorList>
            <person name="Scapin G."/>
            <person name="Ozturk D.H."/>
            <person name="Grubmeyer C."/>
            <person name="Sacchettini J.C."/>
        </authorList>
    </citation>
    <scope>X-RAY CRYSTALLOGRAPHY (2.3 ANGSTROMS) IN COMPLEX WITH OROTATE AND PRPP</scope>
</reference>
<proteinExistence type="evidence at protein level"/>
<feature type="initiator methionine" description="Removed" evidence="2">
    <location>
        <position position="1"/>
    </location>
</feature>
<feature type="chain" id="PRO_0000110734" description="Orotate phosphoribosyltransferase">
    <location>
        <begin position="2"/>
        <end position="213"/>
    </location>
</feature>
<feature type="binding site" description="in other chain" evidence="3">
    <location>
        <position position="26"/>
    </location>
    <ligand>
        <name>5-phospho-alpha-D-ribose 1-diphosphate</name>
        <dbReference type="ChEBI" id="CHEBI:58017"/>
        <note>ligand shared between dimeric partners</note>
    </ligand>
</feature>
<feature type="binding site" evidence="3">
    <location>
        <begin position="34"/>
        <end position="35"/>
    </location>
    <ligand>
        <name>orotate</name>
        <dbReference type="ChEBI" id="CHEBI:30839"/>
    </ligand>
</feature>
<feature type="binding site" description="in other chain" evidence="3">
    <location>
        <begin position="72"/>
        <end position="73"/>
    </location>
    <ligand>
        <name>5-phospho-alpha-D-ribose 1-diphosphate</name>
        <dbReference type="ChEBI" id="CHEBI:58017"/>
        <note>ligand shared between dimeric partners</note>
    </ligand>
</feature>
<feature type="binding site" evidence="3">
    <location>
        <position position="99"/>
    </location>
    <ligand>
        <name>5-phospho-alpha-D-ribose 1-diphosphate</name>
        <dbReference type="ChEBI" id="CHEBI:58017"/>
        <note>ligand shared between dimeric partners</note>
    </ligand>
</feature>
<feature type="binding site" description="in other chain" evidence="3">
    <location>
        <position position="100"/>
    </location>
    <ligand>
        <name>5-phospho-alpha-D-ribose 1-diphosphate</name>
        <dbReference type="ChEBI" id="CHEBI:58017"/>
        <note>ligand shared between dimeric partners</note>
    </ligand>
</feature>
<feature type="binding site" evidence="3">
    <location>
        <position position="103"/>
    </location>
    <ligand>
        <name>5-phospho-alpha-D-ribose 1-diphosphate</name>
        <dbReference type="ChEBI" id="CHEBI:58017"/>
        <note>ligand shared between dimeric partners</note>
    </ligand>
</feature>
<feature type="binding site" evidence="3">
    <location>
        <position position="105"/>
    </location>
    <ligand>
        <name>5-phospho-alpha-D-ribose 1-diphosphate</name>
        <dbReference type="ChEBI" id="CHEBI:58017"/>
        <note>ligand shared between dimeric partners</note>
    </ligand>
</feature>
<feature type="binding site" description="in other chain" evidence="3">
    <location>
        <begin position="124"/>
        <end position="132"/>
    </location>
    <ligand>
        <name>5-phospho-alpha-D-ribose 1-diphosphate</name>
        <dbReference type="ChEBI" id="CHEBI:58017"/>
        <note>ligand shared between dimeric partners</note>
    </ligand>
</feature>
<feature type="binding site" evidence="3">
    <location>
        <position position="128"/>
    </location>
    <ligand>
        <name>orotate</name>
        <dbReference type="ChEBI" id="CHEBI:30839"/>
    </ligand>
</feature>
<feature type="binding site" evidence="3">
    <location>
        <position position="156"/>
    </location>
    <ligand>
        <name>orotate</name>
        <dbReference type="ChEBI" id="CHEBI:30839"/>
    </ligand>
</feature>
<feature type="mutagenesis site" description="No loss of activity." evidence="4">
    <original>K</original>
    <variation>Q</variation>
    <location>
        <position position="19"/>
    </location>
</feature>
<feature type="mutagenesis site" description="Reduced activity." evidence="4">
    <original>K</original>
    <variation>A</variation>
    <variation>Q</variation>
    <location>
        <position position="26"/>
    </location>
</feature>
<feature type="mutagenesis site" description="Significant loss of activity." evidence="4">
    <original>K</original>
    <variation>A</variation>
    <variation>Q</variation>
    <location>
        <position position="73"/>
    </location>
</feature>
<feature type="mutagenesis site" description="Reduced activity." evidence="4">
    <original>K</original>
    <variation>A</variation>
    <location>
        <position position="100"/>
    </location>
</feature>
<feature type="mutagenesis site" description="Drastically reduced activity." evidence="4">
    <original>K</original>
    <variation>A</variation>
    <variation>Q</variation>
    <location>
        <position position="103"/>
    </location>
</feature>
<feature type="mutagenesis site" description="Loss of activity." evidence="4">
    <original>D</original>
    <variation>N</variation>
    <location>
        <position position="124"/>
    </location>
</feature>
<feature type="mutagenesis site" description="Loss of activity." evidence="4">
    <original>D</original>
    <variation>N</variation>
    <location>
        <position position="125"/>
    </location>
</feature>
<feature type="helix" evidence="9">
    <location>
        <begin position="3"/>
        <end position="14"/>
    </location>
</feature>
<feature type="strand" evidence="9">
    <location>
        <begin position="17"/>
        <end position="24"/>
    </location>
</feature>
<feature type="strand" evidence="9">
    <location>
        <begin position="30"/>
        <end position="35"/>
    </location>
</feature>
<feature type="helix" evidence="9">
    <location>
        <begin position="37"/>
        <end position="39"/>
    </location>
</feature>
<feature type="helix" evidence="9">
    <location>
        <begin position="43"/>
        <end position="60"/>
    </location>
</feature>
<feature type="strand" evidence="9">
    <location>
        <begin position="65"/>
        <end position="68"/>
    </location>
</feature>
<feature type="turn" evidence="9">
    <location>
        <begin position="71"/>
        <end position="73"/>
    </location>
</feature>
<feature type="helix" evidence="9">
    <location>
        <begin position="74"/>
        <end position="89"/>
    </location>
</feature>
<feature type="strand" evidence="9">
    <location>
        <begin position="94"/>
        <end position="98"/>
    </location>
</feature>
<feature type="strand" evidence="10">
    <location>
        <begin position="104"/>
        <end position="106"/>
    </location>
</feature>
<feature type="strand" evidence="9">
    <location>
        <begin position="109"/>
        <end position="114"/>
    </location>
</feature>
<feature type="strand" evidence="9">
    <location>
        <begin position="118"/>
        <end position="123"/>
    </location>
</feature>
<feature type="strand" evidence="9">
    <location>
        <begin position="128"/>
        <end position="130"/>
    </location>
</feature>
<feature type="helix" evidence="9">
    <location>
        <begin position="132"/>
        <end position="142"/>
    </location>
</feature>
<feature type="strand" evidence="9">
    <location>
        <begin position="146"/>
        <end position="155"/>
    </location>
</feature>
<feature type="strand" evidence="9">
    <location>
        <begin position="161"/>
        <end position="165"/>
    </location>
</feature>
<feature type="helix" evidence="9">
    <location>
        <begin position="166"/>
        <end position="174"/>
    </location>
</feature>
<feature type="strand" evidence="9">
    <location>
        <begin position="177"/>
        <end position="183"/>
    </location>
</feature>
<feature type="helix" evidence="9">
    <location>
        <begin position="184"/>
        <end position="193"/>
    </location>
</feature>
<feature type="helix" evidence="9">
    <location>
        <begin position="195"/>
        <end position="197"/>
    </location>
</feature>
<feature type="helix" evidence="9">
    <location>
        <begin position="198"/>
        <end position="211"/>
    </location>
</feature>
<gene>
    <name evidence="8" type="primary">pyrE</name>
    <name type="ordered locus">STM3733</name>
</gene>
<organism>
    <name type="scientific">Salmonella typhimurium (strain LT2 / SGSC1412 / ATCC 700720)</name>
    <dbReference type="NCBI Taxonomy" id="99287"/>
    <lineage>
        <taxon>Bacteria</taxon>
        <taxon>Pseudomonadati</taxon>
        <taxon>Pseudomonadota</taxon>
        <taxon>Gammaproteobacteria</taxon>
        <taxon>Enterobacterales</taxon>
        <taxon>Enterobacteriaceae</taxon>
        <taxon>Salmonella</taxon>
    </lineage>
</organism>
<protein>
    <recommendedName>
        <fullName evidence="1">Orotate phosphoribosyltransferase</fullName>
        <shortName evidence="1">OPRT</shortName>
        <shortName evidence="1">OPRTase</shortName>
        <ecNumber evidence="1">2.4.2.10</ecNumber>
    </recommendedName>
</protein>
<evidence type="ECO:0000255" key="1">
    <source>
        <dbReference type="HAMAP-Rule" id="MF_01208"/>
    </source>
</evidence>
<evidence type="ECO:0000269" key="2">
    <source>
    </source>
</evidence>
<evidence type="ECO:0000269" key="3">
    <source>
    </source>
</evidence>
<evidence type="ECO:0000269" key="4">
    <source>
    </source>
</evidence>
<evidence type="ECO:0000269" key="5">
    <source>
    </source>
</evidence>
<evidence type="ECO:0000269" key="6">
    <source>
    </source>
</evidence>
<evidence type="ECO:0000269" key="7">
    <source>
    </source>
</evidence>
<evidence type="ECO:0000303" key="8">
    <source>
    </source>
</evidence>
<evidence type="ECO:0007829" key="9">
    <source>
        <dbReference type="PDB" id="1LH0"/>
    </source>
</evidence>
<evidence type="ECO:0007829" key="10">
    <source>
        <dbReference type="PDB" id="1OPR"/>
    </source>
</evidence>
<accession>P08870</accession>
<keyword id="KW-0002">3D-structure</keyword>
<keyword id="KW-0903">Direct protein sequencing</keyword>
<keyword id="KW-0328">Glycosyltransferase</keyword>
<keyword id="KW-0460">Magnesium</keyword>
<keyword id="KW-0665">Pyrimidine biosynthesis</keyword>
<keyword id="KW-1185">Reference proteome</keyword>
<keyword id="KW-0808">Transferase</keyword>
<name>PYRE_SALTY</name>
<sequence>MKPYQRQFIEFALNKQVLKFGEFTLKSGRKSPYFFNAGLFNTGRDLALLGRFYAEALVDSGIEFDLLFGPAYKGIPIATTTAVALAEHHDKDLPYCFNRKEAKDHGEGGSLVGSALQGRVMLVDDVITAGTAIRESMEIIQAHGATLAGVLISLDRQERGRGEISAIQEVERDYGCKVISIITLKDLIAYLEEKPDMAEHLAAVRAYREEFGV</sequence>
<dbReference type="EC" id="2.4.2.10" evidence="1"/>
<dbReference type="EMBL" id="Z19547">
    <property type="protein sequence ID" value="CAA79607.1"/>
    <property type="molecule type" value="Genomic_DNA"/>
</dbReference>
<dbReference type="EMBL" id="AE006468">
    <property type="protein sequence ID" value="AAL22592.1"/>
    <property type="molecule type" value="Genomic_DNA"/>
</dbReference>
<dbReference type="PIR" id="S32801">
    <property type="entry name" value="S32801"/>
</dbReference>
<dbReference type="RefSeq" id="NP_462633.1">
    <property type="nucleotide sequence ID" value="NC_003197.2"/>
</dbReference>
<dbReference type="RefSeq" id="WP_000806167.1">
    <property type="nucleotide sequence ID" value="NC_003197.2"/>
</dbReference>
<dbReference type="PDB" id="1LH0">
    <property type="method" value="X-ray"/>
    <property type="resolution" value="2.00 A"/>
    <property type="chains" value="A/B=1-213"/>
</dbReference>
<dbReference type="PDB" id="1OPR">
    <property type="method" value="X-ray"/>
    <property type="resolution" value="2.30 A"/>
    <property type="chains" value="A=1-213"/>
</dbReference>
<dbReference type="PDB" id="1STO">
    <property type="method" value="X-ray"/>
    <property type="resolution" value="2.60 A"/>
    <property type="chains" value="A=1-213"/>
</dbReference>
<dbReference type="PDBsum" id="1LH0"/>
<dbReference type="PDBsum" id="1OPR"/>
<dbReference type="PDBsum" id="1STO"/>
<dbReference type="SMR" id="P08870"/>
<dbReference type="STRING" id="99287.STM3733"/>
<dbReference type="DrugBank" id="DB01632">
    <property type="generic name" value="5-O-phosphono-alpha-D-ribofuranosyl diphosphate"/>
</dbReference>
<dbReference type="DrugBank" id="DB02262">
    <property type="generic name" value="Orotic acid"/>
</dbReference>
<dbReference type="PaxDb" id="99287-STM3733"/>
<dbReference type="GeneID" id="1255257"/>
<dbReference type="KEGG" id="stm:STM3733"/>
<dbReference type="PATRIC" id="fig|99287.12.peg.3949"/>
<dbReference type="HOGENOM" id="CLU_074878_0_1_6"/>
<dbReference type="OMA" id="SPFFMNA"/>
<dbReference type="PhylomeDB" id="P08870"/>
<dbReference type="BioCyc" id="SENT99287:STM3733-MONOMER"/>
<dbReference type="SABIO-RK" id="P08870"/>
<dbReference type="UniPathway" id="UPA00070">
    <property type="reaction ID" value="UER00119"/>
</dbReference>
<dbReference type="EvolutionaryTrace" id="P08870"/>
<dbReference type="PHI-base" id="PHI:7662"/>
<dbReference type="Proteomes" id="UP000001014">
    <property type="component" value="Chromosome"/>
</dbReference>
<dbReference type="GO" id="GO:0005737">
    <property type="term" value="C:cytoplasm"/>
    <property type="evidence" value="ECO:0000318"/>
    <property type="project" value="GO_Central"/>
</dbReference>
<dbReference type="GO" id="GO:0000287">
    <property type="term" value="F:magnesium ion binding"/>
    <property type="evidence" value="ECO:0007669"/>
    <property type="project" value="UniProtKB-UniRule"/>
</dbReference>
<dbReference type="GO" id="GO:0004588">
    <property type="term" value="F:orotate phosphoribosyltransferase activity"/>
    <property type="evidence" value="ECO:0000318"/>
    <property type="project" value="GO_Central"/>
</dbReference>
<dbReference type="GO" id="GO:0006207">
    <property type="term" value="P:'de novo' pyrimidine nucleobase biosynthetic process"/>
    <property type="evidence" value="ECO:0000318"/>
    <property type="project" value="GO_Central"/>
</dbReference>
<dbReference type="GO" id="GO:0044205">
    <property type="term" value="P:'de novo' UMP biosynthetic process"/>
    <property type="evidence" value="ECO:0007669"/>
    <property type="project" value="UniProtKB-UniRule"/>
</dbReference>
<dbReference type="GO" id="GO:0006221">
    <property type="term" value="P:pyrimidine nucleotide biosynthetic process"/>
    <property type="evidence" value="ECO:0000318"/>
    <property type="project" value="GO_Central"/>
</dbReference>
<dbReference type="GO" id="GO:0046132">
    <property type="term" value="P:pyrimidine ribonucleoside biosynthetic process"/>
    <property type="evidence" value="ECO:0000318"/>
    <property type="project" value="GO_Central"/>
</dbReference>
<dbReference type="CDD" id="cd06223">
    <property type="entry name" value="PRTases_typeI"/>
    <property type="match status" value="1"/>
</dbReference>
<dbReference type="FunFam" id="3.40.50.2020:FF:000008">
    <property type="entry name" value="Orotate phosphoribosyltransferase"/>
    <property type="match status" value="1"/>
</dbReference>
<dbReference type="Gene3D" id="3.40.50.2020">
    <property type="match status" value="1"/>
</dbReference>
<dbReference type="HAMAP" id="MF_01208">
    <property type="entry name" value="PyrE"/>
    <property type="match status" value="1"/>
</dbReference>
<dbReference type="InterPro" id="IPR023031">
    <property type="entry name" value="OPRT"/>
</dbReference>
<dbReference type="InterPro" id="IPR004467">
    <property type="entry name" value="Or_phspho_trans_dom"/>
</dbReference>
<dbReference type="InterPro" id="IPR000836">
    <property type="entry name" value="PRibTrfase_dom"/>
</dbReference>
<dbReference type="InterPro" id="IPR029057">
    <property type="entry name" value="PRTase-like"/>
</dbReference>
<dbReference type="NCBIfam" id="TIGR00336">
    <property type="entry name" value="pyrE"/>
    <property type="match status" value="1"/>
</dbReference>
<dbReference type="PANTHER" id="PTHR46683">
    <property type="entry name" value="OROTATE PHOSPHORIBOSYLTRANSFERASE 1-RELATED"/>
    <property type="match status" value="1"/>
</dbReference>
<dbReference type="PANTHER" id="PTHR46683:SF1">
    <property type="entry name" value="OROTATE PHOSPHORIBOSYLTRANSFERASE 1-RELATED"/>
    <property type="match status" value="1"/>
</dbReference>
<dbReference type="Pfam" id="PF00156">
    <property type="entry name" value="Pribosyltran"/>
    <property type="match status" value="1"/>
</dbReference>
<dbReference type="SUPFAM" id="SSF53271">
    <property type="entry name" value="PRTase-like"/>
    <property type="match status" value="1"/>
</dbReference>
<dbReference type="PROSITE" id="PS00103">
    <property type="entry name" value="PUR_PYR_PR_TRANSFER"/>
    <property type="match status" value="1"/>
</dbReference>
<comment type="function">
    <text evidence="1 2">Catalyzes the transfer of a ribosyl phosphate group from 5-phosphoribose 1-diphosphate to orotate, leading to the formation of orotidine monophosphate (OMP).</text>
</comment>
<comment type="catalytic activity">
    <reaction evidence="1">
        <text>orotidine 5'-phosphate + diphosphate = orotate + 5-phospho-alpha-D-ribose 1-diphosphate</text>
        <dbReference type="Rhea" id="RHEA:10380"/>
        <dbReference type="ChEBI" id="CHEBI:30839"/>
        <dbReference type="ChEBI" id="CHEBI:33019"/>
        <dbReference type="ChEBI" id="CHEBI:57538"/>
        <dbReference type="ChEBI" id="CHEBI:58017"/>
        <dbReference type="EC" id="2.4.2.10"/>
    </reaction>
</comment>
<comment type="cofactor">
    <cofactor evidence="6">
        <name>Mg(2+)</name>
        <dbReference type="ChEBI" id="CHEBI:18420"/>
    </cofactor>
    <cofactor evidence="6">
        <name>Mn(2+)</name>
        <dbReference type="ChEBI" id="CHEBI:29035"/>
    </cofactor>
    <text evidence="6">Mg(2+). Mn(2+) can replace Mg(2+) as the divalent metal. The role of the metal is to bind 5-phosphoribose 1-diphosphate and form a Mg-5-phosphoribose 1-diphosphate complex which then serves as substrate for OPRTase.</text>
</comment>
<comment type="pathway">
    <text evidence="1">Pyrimidine metabolism; UMP biosynthesis via de novo pathway; UMP from orotate: step 1/2.</text>
</comment>
<comment type="subunit">
    <text evidence="3 5 7">Homodimer.</text>
</comment>
<comment type="similarity">
    <text evidence="1">Belongs to the purine/pyrimidine phosphoribosyltransferase family. PyrE subfamily.</text>
</comment>